<sequence length="435" mass="47585">MTQLEAARKGKITEEMAYVAEKEGVSPEFVREGVAAGRIVIPRNPNHKTLTDFKGIGEGLSVKVNANLGTSYDYVNVEEEVEKARVAIQYGADTVMDLSTGGDLKAIRKRILEVATVPLGTVPIYEAEFRAARRKNFFDMSADELFQVIEEHGKEGVDYITVHVGVTLKNLEVYRNSPRTTGIVSRGGGLMAAWMLHRGEENPLYARFDDLLDIARTYDMTLSLGDGLRPGSLADSTDRAQIAELLTIGELVERARRAGVQAMVEGPGHIPLNEVAANVQIQKKLTGHAPFYILGMLPVDTAAGFDHIAGAIGGALAGWWGADMLCYLTPAEHLGLPTPEHVKQGVIAFKIAAHAADVARGNKRALERNRRMSEARYRLDWEGQFALALFPEEARRLKEERGSKTKACSMCGPFCPMNLVEAVLKGKGRMELPVA</sequence>
<keyword id="KW-0004">4Fe-4S</keyword>
<keyword id="KW-0408">Iron</keyword>
<keyword id="KW-0411">Iron-sulfur</keyword>
<keyword id="KW-0456">Lyase</keyword>
<keyword id="KW-0479">Metal-binding</keyword>
<keyword id="KW-0949">S-adenosyl-L-methionine</keyword>
<keyword id="KW-0784">Thiamine biosynthesis</keyword>
<keyword id="KW-0862">Zinc</keyword>
<reference key="1">
    <citation type="journal article" date="2004" name="Nat. Biotechnol.">
        <title>The genome sequence of the extreme thermophile Thermus thermophilus.</title>
        <authorList>
            <person name="Henne A."/>
            <person name="Brueggemann H."/>
            <person name="Raasch C."/>
            <person name="Wiezer A."/>
            <person name="Hartsch T."/>
            <person name="Liesegang H."/>
            <person name="Johann A."/>
            <person name="Lienard T."/>
            <person name="Gohl O."/>
            <person name="Martinez-Arias R."/>
            <person name="Jacobi C."/>
            <person name="Starkuviene V."/>
            <person name="Schlenczeck S."/>
            <person name="Dencker S."/>
            <person name="Huber R."/>
            <person name="Klenk H.-P."/>
            <person name="Kramer W."/>
            <person name="Merkl R."/>
            <person name="Gottschalk G."/>
            <person name="Fritz H.-J."/>
        </authorList>
    </citation>
    <scope>NUCLEOTIDE SEQUENCE [LARGE SCALE GENOMIC DNA]</scope>
    <source>
        <strain>ATCC BAA-163 / DSM 7039 / HB27</strain>
    </source>
</reference>
<accession>Q72KP6</accession>
<gene>
    <name evidence="1" type="primary">thiC</name>
    <name type="ordered locus">TT_C0319</name>
</gene>
<comment type="function">
    <text evidence="1">Catalyzes the synthesis of the hydroxymethylpyrimidine phosphate (HMP-P) moiety of thiamine from aminoimidazole ribotide (AIR) in a radical S-adenosyl-L-methionine (SAM)-dependent reaction.</text>
</comment>
<comment type="catalytic activity">
    <reaction evidence="1">
        <text>5-amino-1-(5-phospho-beta-D-ribosyl)imidazole + S-adenosyl-L-methionine = 4-amino-2-methyl-5-(phosphooxymethyl)pyrimidine + CO + 5'-deoxyadenosine + formate + L-methionine + 3 H(+)</text>
        <dbReference type="Rhea" id="RHEA:24840"/>
        <dbReference type="ChEBI" id="CHEBI:15378"/>
        <dbReference type="ChEBI" id="CHEBI:15740"/>
        <dbReference type="ChEBI" id="CHEBI:17245"/>
        <dbReference type="ChEBI" id="CHEBI:17319"/>
        <dbReference type="ChEBI" id="CHEBI:57844"/>
        <dbReference type="ChEBI" id="CHEBI:58354"/>
        <dbReference type="ChEBI" id="CHEBI:59789"/>
        <dbReference type="ChEBI" id="CHEBI:137981"/>
        <dbReference type="EC" id="4.1.99.17"/>
    </reaction>
</comment>
<comment type="cofactor">
    <cofactor evidence="1">
        <name>[4Fe-4S] cluster</name>
        <dbReference type="ChEBI" id="CHEBI:49883"/>
    </cofactor>
    <text evidence="1">Binds 1 [4Fe-4S] cluster per subunit. The cluster is coordinated with 3 cysteines and an exchangeable S-adenosyl-L-methionine.</text>
</comment>
<comment type="pathway">
    <text evidence="1">Cofactor biosynthesis; thiamine diphosphate biosynthesis.</text>
</comment>
<comment type="similarity">
    <text evidence="1">Belongs to the ThiC family.</text>
</comment>
<protein>
    <recommendedName>
        <fullName evidence="1">Phosphomethylpyrimidine synthase</fullName>
        <ecNumber evidence="1">4.1.99.17</ecNumber>
    </recommendedName>
    <alternativeName>
        <fullName evidence="1">Hydroxymethylpyrimidine phosphate synthase</fullName>
        <shortName evidence="1">HMP-P synthase</shortName>
        <shortName evidence="1">HMP-phosphate synthase</shortName>
        <shortName evidence="1">HMPP synthase</shortName>
    </alternativeName>
    <alternativeName>
        <fullName evidence="1">Thiamine biosynthesis protein ThiC</fullName>
    </alternativeName>
</protein>
<feature type="chain" id="PRO_0000242312" description="Phosphomethylpyrimidine synthase">
    <location>
        <begin position="1"/>
        <end position="435"/>
    </location>
</feature>
<feature type="binding site" evidence="1">
    <location>
        <position position="67"/>
    </location>
    <ligand>
        <name>substrate</name>
    </ligand>
</feature>
<feature type="binding site" evidence="1">
    <location>
        <position position="96"/>
    </location>
    <ligand>
        <name>substrate</name>
    </ligand>
</feature>
<feature type="binding site" evidence="1">
    <location>
        <position position="125"/>
    </location>
    <ligand>
        <name>substrate</name>
    </ligand>
</feature>
<feature type="binding site" evidence="1">
    <location>
        <position position="163"/>
    </location>
    <ligand>
        <name>substrate</name>
    </ligand>
</feature>
<feature type="binding site" evidence="1">
    <location>
        <begin position="185"/>
        <end position="187"/>
    </location>
    <ligand>
        <name>substrate</name>
    </ligand>
</feature>
<feature type="binding site" evidence="1">
    <location>
        <begin position="226"/>
        <end position="229"/>
    </location>
    <ligand>
        <name>substrate</name>
    </ligand>
</feature>
<feature type="binding site" evidence="1">
    <location>
        <position position="265"/>
    </location>
    <ligand>
        <name>substrate</name>
    </ligand>
</feature>
<feature type="binding site" evidence="1">
    <location>
        <position position="269"/>
    </location>
    <ligand>
        <name>Zn(2+)</name>
        <dbReference type="ChEBI" id="CHEBI:29105"/>
    </ligand>
</feature>
<feature type="binding site" evidence="1">
    <location>
        <position position="292"/>
    </location>
    <ligand>
        <name>substrate</name>
    </ligand>
</feature>
<feature type="binding site" evidence="1">
    <location>
        <position position="333"/>
    </location>
    <ligand>
        <name>Zn(2+)</name>
        <dbReference type="ChEBI" id="CHEBI:29105"/>
    </ligand>
</feature>
<feature type="binding site" evidence="1">
    <location>
        <position position="408"/>
    </location>
    <ligand>
        <name>[4Fe-4S] cluster</name>
        <dbReference type="ChEBI" id="CHEBI:49883"/>
        <note>4Fe-4S-S-AdoMet</note>
    </ligand>
</feature>
<feature type="binding site" evidence="1">
    <location>
        <position position="411"/>
    </location>
    <ligand>
        <name>[4Fe-4S] cluster</name>
        <dbReference type="ChEBI" id="CHEBI:49883"/>
        <note>4Fe-4S-S-AdoMet</note>
    </ligand>
</feature>
<feature type="binding site" evidence="1">
    <location>
        <position position="415"/>
    </location>
    <ligand>
        <name>[4Fe-4S] cluster</name>
        <dbReference type="ChEBI" id="CHEBI:49883"/>
        <note>4Fe-4S-S-AdoMet</note>
    </ligand>
</feature>
<evidence type="ECO:0000255" key="1">
    <source>
        <dbReference type="HAMAP-Rule" id="MF_00089"/>
    </source>
</evidence>
<dbReference type="EC" id="4.1.99.17" evidence="1"/>
<dbReference type="EMBL" id="AE017221">
    <property type="protein sequence ID" value="AAS80667.1"/>
    <property type="molecule type" value="Genomic_DNA"/>
</dbReference>
<dbReference type="RefSeq" id="WP_011172770.1">
    <property type="nucleotide sequence ID" value="NC_005835.1"/>
</dbReference>
<dbReference type="SMR" id="Q72KP6"/>
<dbReference type="KEGG" id="tth:TT_C0319"/>
<dbReference type="eggNOG" id="COG0422">
    <property type="taxonomic scope" value="Bacteria"/>
</dbReference>
<dbReference type="HOGENOM" id="CLU_013181_2_2_0"/>
<dbReference type="OrthoDB" id="9805897at2"/>
<dbReference type="UniPathway" id="UPA00060"/>
<dbReference type="Proteomes" id="UP000000592">
    <property type="component" value="Chromosome"/>
</dbReference>
<dbReference type="GO" id="GO:0051539">
    <property type="term" value="F:4 iron, 4 sulfur cluster binding"/>
    <property type="evidence" value="ECO:0007669"/>
    <property type="project" value="UniProtKB-KW"/>
</dbReference>
<dbReference type="GO" id="GO:0016830">
    <property type="term" value="F:carbon-carbon lyase activity"/>
    <property type="evidence" value="ECO:0007669"/>
    <property type="project" value="InterPro"/>
</dbReference>
<dbReference type="GO" id="GO:0008270">
    <property type="term" value="F:zinc ion binding"/>
    <property type="evidence" value="ECO:0007669"/>
    <property type="project" value="UniProtKB-UniRule"/>
</dbReference>
<dbReference type="GO" id="GO:0009228">
    <property type="term" value="P:thiamine biosynthetic process"/>
    <property type="evidence" value="ECO:0007669"/>
    <property type="project" value="UniProtKB-KW"/>
</dbReference>
<dbReference type="GO" id="GO:0009229">
    <property type="term" value="P:thiamine diphosphate biosynthetic process"/>
    <property type="evidence" value="ECO:0007669"/>
    <property type="project" value="UniProtKB-UniRule"/>
</dbReference>
<dbReference type="FunFam" id="3.20.20.540:FF:000001">
    <property type="entry name" value="Phosphomethylpyrimidine synthase"/>
    <property type="match status" value="1"/>
</dbReference>
<dbReference type="Gene3D" id="6.10.250.620">
    <property type="match status" value="1"/>
</dbReference>
<dbReference type="Gene3D" id="3.20.20.540">
    <property type="entry name" value="Radical SAM ThiC family, central domain"/>
    <property type="match status" value="1"/>
</dbReference>
<dbReference type="HAMAP" id="MF_00089">
    <property type="entry name" value="ThiC"/>
    <property type="match status" value="1"/>
</dbReference>
<dbReference type="InterPro" id="IPR037509">
    <property type="entry name" value="ThiC"/>
</dbReference>
<dbReference type="InterPro" id="IPR038521">
    <property type="entry name" value="ThiC/Bza_core_dom"/>
</dbReference>
<dbReference type="InterPro" id="IPR002817">
    <property type="entry name" value="ThiC/BzaA/B"/>
</dbReference>
<dbReference type="NCBIfam" id="NF009895">
    <property type="entry name" value="PRK13352.1"/>
    <property type="match status" value="1"/>
</dbReference>
<dbReference type="NCBIfam" id="TIGR00190">
    <property type="entry name" value="thiC"/>
    <property type="match status" value="1"/>
</dbReference>
<dbReference type="PANTHER" id="PTHR30557:SF1">
    <property type="entry name" value="PHOSPHOMETHYLPYRIMIDINE SYNTHASE, CHLOROPLASTIC"/>
    <property type="match status" value="1"/>
</dbReference>
<dbReference type="PANTHER" id="PTHR30557">
    <property type="entry name" value="THIAMINE BIOSYNTHESIS PROTEIN THIC"/>
    <property type="match status" value="1"/>
</dbReference>
<dbReference type="Pfam" id="PF01964">
    <property type="entry name" value="ThiC_Rad_SAM"/>
    <property type="match status" value="1"/>
</dbReference>
<dbReference type="SFLD" id="SFLDF00407">
    <property type="entry name" value="phosphomethylpyrimidine_syntha"/>
    <property type="match status" value="1"/>
</dbReference>
<dbReference type="SFLD" id="SFLDG01114">
    <property type="entry name" value="phosphomethylpyrimidine_syntha"/>
    <property type="match status" value="1"/>
</dbReference>
<dbReference type="SFLD" id="SFLDS00113">
    <property type="entry name" value="Radical_SAM_Phosphomethylpyrim"/>
    <property type="match status" value="1"/>
</dbReference>
<organism>
    <name type="scientific">Thermus thermophilus (strain ATCC BAA-163 / DSM 7039 / HB27)</name>
    <dbReference type="NCBI Taxonomy" id="262724"/>
    <lineage>
        <taxon>Bacteria</taxon>
        <taxon>Thermotogati</taxon>
        <taxon>Deinococcota</taxon>
        <taxon>Deinococci</taxon>
        <taxon>Thermales</taxon>
        <taxon>Thermaceae</taxon>
        <taxon>Thermus</taxon>
    </lineage>
</organism>
<name>THIC_THET2</name>
<proteinExistence type="inferred from homology"/>